<evidence type="ECO:0000255" key="1">
    <source>
        <dbReference type="HAMAP-Rule" id="MF_00402"/>
    </source>
</evidence>
<evidence type="ECO:0000305" key="2"/>
<organism>
    <name type="scientific">Brucella abortus biovar 1 (strain 9-941)</name>
    <dbReference type="NCBI Taxonomy" id="262698"/>
    <lineage>
        <taxon>Bacteria</taxon>
        <taxon>Pseudomonadati</taxon>
        <taxon>Pseudomonadota</taxon>
        <taxon>Alphaproteobacteria</taxon>
        <taxon>Hyphomicrobiales</taxon>
        <taxon>Brucellaceae</taxon>
        <taxon>Brucella/Ochrobactrum group</taxon>
        <taxon>Brucella</taxon>
    </lineage>
</organism>
<gene>
    <name evidence="1" type="primary">rplS</name>
    <name type="ordered locus">BruAb1_1883</name>
</gene>
<accession>Q57AY9</accession>
<feature type="chain" id="PRO_0000226832" description="Large ribosomal subunit protein bL19">
    <location>
        <begin position="1"/>
        <end position="145"/>
    </location>
</feature>
<keyword id="KW-0687">Ribonucleoprotein</keyword>
<keyword id="KW-0689">Ribosomal protein</keyword>
<dbReference type="EMBL" id="AE017223">
    <property type="protein sequence ID" value="AAX75195.1"/>
    <property type="molecule type" value="Genomic_DNA"/>
</dbReference>
<dbReference type="RefSeq" id="WP_002964975.1">
    <property type="nucleotide sequence ID" value="NC_006932.1"/>
</dbReference>
<dbReference type="SMR" id="Q57AY9"/>
<dbReference type="EnsemblBacteria" id="AAX75195">
    <property type="protein sequence ID" value="AAX75195"/>
    <property type="gene ID" value="BruAb1_1883"/>
</dbReference>
<dbReference type="GeneID" id="97534805"/>
<dbReference type="KEGG" id="bmb:BruAb1_1883"/>
<dbReference type="HOGENOM" id="CLU_103507_0_2_5"/>
<dbReference type="PRO" id="PR:Q57AY9"/>
<dbReference type="Proteomes" id="UP000000540">
    <property type="component" value="Chromosome I"/>
</dbReference>
<dbReference type="GO" id="GO:0022625">
    <property type="term" value="C:cytosolic large ribosomal subunit"/>
    <property type="evidence" value="ECO:0007669"/>
    <property type="project" value="TreeGrafter"/>
</dbReference>
<dbReference type="GO" id="GO:0003735">
    <property type="term" value="F:structural constituent of ribosome"/>
    <property type="evidence" value="ECO:0007669"/>
    <property type="project" value="InterPro"/>
</dbReference>
<dbReference type="GO" id="GO:0006412">
    <property type="term" value="P:translation"/>
    <property type="evidence" value="ECO:0007669"/>
    <property type="project" value="UniProtKB-UniRule"/>
</dbReference>
<dbReference type="FunFam" id="2.30.30.790:FF:000001">
    <property type="entry name" value="50S ribosomal protein L19"/>
    <property type="match status" value="1"/>
</dbReference>
<dbReference type="Gene3D" id="2.30.30.790">
    <property type="match status" value="1"/>
</dbReference>
<dbReference type="HAMAP" id="MF_00402">
    <property type="entry name" value="Ribosomal_bL19"/>
    <property type="match status" value="1"/>
</dbReference>
<dbReference type="InterPro" id="IPR001857">
    <property type="entry name" value="Ribosomal_bL19"/>
</dbReference>
<dbReference type="InterPro" id="IPR018257">
    <property type="entry name" value="Ribosomal_bL19_CS"/>
</dbReference>
<dbReference type="InterPro" id="IPR038657">
    <property type="entry name" value="Ribosomal_bL19_sf"/>
</dbReference>
<dbReference type="InterPro" id="IPR008991">
    <property type="entry name" value="Translation_prot_SH3-like_sf"/>
</dbReference>
<dbReference type="NCBIfam" id="TIGR01024">
    <property type="entry name" value="rplS_bact"/>
    <property type="match status" value="1"/>
</dbReference>
<dbReference type="PANTHER" id="PTHR15680:SF9">
    <property type="entry name" value="LARGE RIBOSOMAL SUBUNIT PROTEIN BL19M"/>
    <property type="match status" value="1"/>
</dbReference>
<dbReference type="PANTHER" id="PTHR15680">
    <property type="entry name" value="RIBOSOMAL PROTEIN L19"/>
    <property type="match status" value="1"/>
</dbReference>
<dbReference type="Pfam" id="PF01245">
    <property type="entry name" value="Ribosomal_L19"/>
    <property type="match status" value="1"/>
</dbReference>
<dbReference type="PIRSF" id="PIRSF002191">
    <property type="entry name" value="Ribosomal_L19"/>
    <property type="match status" value="1"/>
</dbReference>
<dbReference type="PRINTS" id="PR00061">
    <property type="entry name" value="RIBOSOMALL19"/>
</dbReference>
<dbReference type="SUPFAM" id="SSF50104">
    <property type="entry name" value="Translation proteins SH3-like domain"/>
    <property type="match status" value="1"/>
</dbReference>
<dbReference type="PROSITE" id="PS01015">
    <property type="entry name" value="RIBOSOMAL_L19"/>
    <property type="match status" value="1"/>
</dbReference>
<reference key="1">
    <citation type="journal article" date="2005" name="J. Bacteriol.">
        <title>Completion of the genome sequence of Brucella abortus and comparison to the highly similar genomes of Brucella melitensis and Brucella suis.</title>
        <authorList>
            <person name="Halling S.M."/>
            <person name="Peterson-Burch B.D."/>
            <person name="Bricker B.J."/>
            <person name="Zuerner R.L."/>
            <person name="Qing Z."/>
            <person name="Li L.-L."/>
            <person name="Kapur V."/>
            <person name="Alt D.P."/>
            <person name="Olsen S.C."/>
        </authorList>
    </citation>
    <scope>NUCLEOTIDE SEQUENCE [LARGE SCALE GENOMIC DNA]</scope>
    <source>
        <strain>9-941</strain>
    </source>
</reference>
<protein>
    <recommendedName>
        <fullName evidence="1">Large ribosomal subunit protein bL19</fullName>
    </recommendedName>
    <alternativeName>
        <fullName evidence="2">50S ribosomal protein L19</fullName>
    </alternativeName>
</protein>
<proteinExistence type="inferred from homology"/>
<comment type="function">
    <text evidence="1">This protein is located at the 30S-50S ribosomal subunit interface and may play a role in the structure and function of the aminoacyl-tRNA binding site.</text>
</comment>
<comment type="similarity">
    <text evidence="1">Belongs to the bacterial ribosomal protein bL19 family.</text>
</comment>
<sequence length="145" mass="16077">MTDIIRQLEAEQAAKIEEKRKLPDFQPGDTVRVQVRVTEGTRTRVQAYEGVCIARSGAGLNENFTVRKISYGEGVERVFPVYSPIVEGVEVVRRGKVRRAKLYYLRGLTGKAARIAEKKDNRTKAERAADKLAAAKAEAAKTAAE</sequence>
<name>RL19_BRUAB</name>